<evidence type="ECO:0000255" key="1">
    <source>
        <dbReference type="HAMAP-Rule" id="MF_00021"/>
    </source>
</evidence>
<sequence>MKFIIKLFPEITIKSKSVRQRFTKMLQGNIRNVLRRFDEDARVRMDWDKLVVSSRNDQFHAQYLETLACIPGIQYFLEVKLSNFTDLHDIFEQTRAVWGDRLKGKTFCVRARRVGKHDFSSLELERYVGGGLNQHCETAGVRLKKPDIQVNLEVENDELYIISAVHHGMGGFPMATQEDVLSLLSGGFDSGVASYQFIKRGCRVHYCFFNLGGAAHEIGVKQVAYYLWSKFGASHKVRFTAIDFEPVVAEILEKVDNGQMGVVLKRMMMRAAGQVADYFQIPALVTGECVGQVSSQTLTNLNVIDRVTDKVILRPLITWDKPDIISEARRIGTLEFAETMPEYCGVISKKPTIKAVLSNIEAEEANFDFAILDKVVSEARYLDIRRIGEETAAEVQEIETTEVLAADEVILDIRSADERDEKPLVVEGRDVLHIPFFKLATAFGDLPKEQTYLLYCDRGVMSKLQALYLKEKGFDNVKVYRP</sequence>
<reference key="1">
    <citation type="journal article" date="2008" name="BMC Genomics">
        <title>The genome of Aeromonas salmonicida subsp. salmonicida A449: insights into the evolution of a fish pathogen.</title>
        <authorList>
            <person name="Reith M.E."/>
            <person name="Singh R.K."/>
            <person name="Curtis B."/>
            <person name="Boyd J.M."/>
            <person name="Bouevitch A."/>
            <person name="Kimball J."/>
            <person name="Munholland J."/>
            <person name="Murphy C."/>
            <person name="Sarty D."/>
            <person name="Williams J."/>
            <person name="Nash J.H."/>
            <person name="Johnson S.C."/>
            <person name="Brown L.L."/>
        </authorList>
    </citation>
    <scope>NUCLEOTIDE SEQUENCE [LARGE SCALE GENOMIC DNA]</scope>
    <source>
        <strain>A449</strain>
    </source>
</reference>
<protein>
    <recommendedName>
        <fullName evidence="1">tRNA sulfurtransferase</fullName>
        <ecNumber evidence="1">2.8.1.4</ecNumber>
    </recommendedName>
    <alternativeName>
        <fullName evidence="1">Sulfur carrier protein ThiS sulfurtransferase</fullName>
    </alternativeName>
    <alternativeName>
        <fullName evidence="1">Thiamine biosynthesis protein ThiI</fullName>
    </alternativeName>
    <alternativeName>
        <fullName evidence="1">tRNA 4-thiouridine synthase</fullName>
    </alternativeName>
</protein>
<proteinExistence type="inferred from homology"/>
<dbReference type="EC" id="2.8.1.4" evidence="1"/>
<dbReference type="EMBL" id="CP000644">
    <property type="protein sequence ID" value="ABO90686.1"/>
    <property type="molecule type" value="Genomic_DNA"/>
</dbReference>
<dbReference type="RefSeq" id="WP_005310296.1">
    <property type="nucleotide sequence ID" value="NC_009348.1"/>
</dbReference>
<dbReference type="SMR" id="A4SP64"/>
<dbReference type="STRING" id="29491.GCA_000820065_00214"/>
<dbReference type="KEGG" id="asa:ASA_2665"/>
<dbReference type="eggNOG" id="COG0301">
    <property type="taxonomic scope" value="Bacteria"/>
</dbReference>
<dbReference type="eggNOG" id="COG0607">
    <property type="taxonomic scope" value="Bacteria"/>
</dbReference>
<dbReference type="HOGENOM" id="CLU_037952_4_1_6"/>
<dbReference type="UniPathway" id="UPA00060"/>
<dbReference type="Proteomes" id="UP000000225">
    <property type="component" value="Chromosome"/>
</dbReference>
<dbReference type="GO" id="GO:0005829">
    <property type="term" value="C:cytosol"/>
    <property type="evidence" value="ECO:0007669"/>
    <property type="project" value="TreeGrafter"/>
</dbReference>
<dbReference type="GO" id="GO:0005524">
    <property type="term" value="F:ATP binding"/>
    <property type="evidence" value="ECO:0007669"/>
    <property type="project" value="UniProtKB-UniRule"/>
</dbReference>
<dbReference type="GO" id="GO:0004810">
    <property type="term" value="F:CCA tRNA nucleotidyltransferase activity"/>
    <property type="evidence" value="ECO:0007669"/>
    <property type="project" value="InterPro"/>
</dbReference>
<dbReference type="GO" id="GO:0000049">
    <property type="term" value="F:tRNA binding"/>
    <property type="evidence" value="ECO:0007669"/>
    <property type="project" value="UniProtKB-UniRule"/>
</dbReference>
<dbReference type="GO" id="GO:0140741">
    <property type="term" value="F:tRNA-uracil-4 sulfurtransferase activity"/>
    <property type="evidence" value="ECO:0007669"/>
    <property type="project" value="UniProtKB-EC"/>
</dbReference>
<dbReference type="GO" id="GO:0009228">
    <property type="term" value="P:thiamine biosynthetic process"/>
    <property type="evidence" value="ECO:0007669"/>
    <property type="project" value="UniProtKB-KW"/>
</dbReference>
<dbReference type="GO" id="GO:0009229">
    <property type="term" value="P:thiamine diphosphate biosynthetic process"/>
    <property type="evidence" value="ECO:0007669"/>
    <property type="project" value="UniProtKB-UniRule"/>
</dbReference>
<dbReference type="GO" id="GO:0052837">
    <property type="term" value="P:thiazole biosynthetic process"/>
    <property type="evidence" value="ECO:0007669"/>
    <property type="project" value="InterPro"/>
</dbReference>
<dbReference type="GO" id="GO:0002937">
    <property type="term" value="P:tRNA 4-thiouridine biosynthesis"/>
    <property type="evidence" value="ECO:0007669"/>
    <property type="project" value="TreeGrafter"/>
</dbReference>
<dbReference type="CDD" id="cd01712">
    <property type="entry name" value="PPase_ThiI"/>
    <property type="match status" value="1"/>
</dbReference>
<dbReference type="CDD" id="cd00158">
    <property type="entry name" value="RHOD"/>
    <property type="match status" value="1"/>
</dbReference>
<dbReference type="CDD" id="cd11716">
    <property type="entry name" value="THUMP_ThiI"/>
    <property type="match status" value="1"/>
</dbReference>
<dbReference type="FunFam" id="3.40.50.620:FF:000029">
    <property type="entry name" value="tRNA sulfurtransferase"/>
    <property type="match status" value="1"/>
</dbReference>
<dbReference type="Gene3D" id="3.30.2130.30">
    <property type="match status" value="1"/>
</dbReference>
<dbReference type="Gene3D" id="3.40.50.620">
    <property type="entry name" value="HUPs"/>
    <property type="match status" value="1"/>
</dbReference>
<dbReference type="Gene3D" id="3.40.250.10">
    <property type="entry name" value="Rhodanese-like domain"/>
    <property type="match status" value="1"/>
</dbReference>
<dbReference type="HAMAP" id="MF_00021">
    <property type="entry name" value="ThiI"/>
    <property type="match status" value="1"/>
</dbReference>
<dbReference type="InterPro" id="IPR001763">
    <property type="entry name" value="Rhodanese-like_dom"/>
</dbReference>
<dbReference type="InterPro" id="IPR036873">
    <property type="entry name" value="Rhodanese-like_dom_sf"/>
</dbReference>
<dbReference type="InterPro" id="IPR014729">
    <property type="entry name" value="Rossmann-like_a/b/a_fold"/>
</dbReference>
<dbReference type="InterPro" id="IPR020536">
    <property type="entry name" value="ThiI_AANH"/>
</dbReference>
<dbReference type="InterPro" id="IPR054173">
    <property type="entry name" value="ThiI_fer"/>
</dbReference>
<dbReference type="InterPro" id="IPR049961">
    <property type="entry name" value="ThiI_N"/>
</dbReference>
<dbReference type="InterPro" id="IPR026340">
    <property type="entry name" value="THII_Thiazole_biosynth_dom"/>
</dbReference>
<dbReference type="InterPro" id="IPR004114">
    <property type="entry name" value="THUMP_dom"/>
</dbReference>
<dbReference type="InterPro" id="IPR049962">
    <property type="entry name" value="THUMP_ThiI"/>
</dbReference>
<dbReference type="InterPro" id="IPR003720">
    <property type="entry name" value="tRNA_STrfase"/>
</dbReference>
<dbReference type="InterPro" id="IPR050102">
    <property type="entry name" value="tRNA_sulfurtransferase_ThiI"/>
</dbReference>
<dbReference type="NCBIfam" id="TIGR04271">
    <property type="entry name" value="ThiI_C_thiazole"/>
    <property type="match status" value="1"/>
</dbReference>
<dbReference type="NCBIfam" id="TIGR00342">
    <property type="entry name" value="tRNA uracil 4-sulfurtransferase ThiI"/>
    <property type="match status" value="1"/>
</dbReference>
<dbReference type="PANTHER" id="PTHR43209">
    <property type="entry name" value="TRNA SULFURTRANSFERASE"/>
    <property type="match status" value="1"/>
</dbReference>
<dbReference type="PANTHER" id="PTHR43209:SF1">
    <property type="entry name" value="TRNA SULFURTRANSFERASE"/>
    <property type="match status" value="1"/>
</dbReference>
<dbReference type="Pfam" id="PF00581">
    <property type="entry name" value="Rhodanese"/>
    <property type="match status" value="1"/>
</dbReference>
<dbReference type="Pfam" id="PF02568">
    <property type="entry name" value="ThiI"/>
    <property type="match status" value="1"/>
</dbReference>
<dbReference type="Pfam" id="PF22025">
    <property type="entry name" value="ThiI_fer"/>
    <property type="match status" value="1"/>
</dbReference>
<dbReference type="Pfam" id="PF02926">
    <property type="entry name" value="THUMP"/>
    <property type="match status" value="1"/>
</dbReference>
<dbReference type="SMART" id="SM00981">
    <property type="entry name" value="THUMP"/>
    <property type="match status" value="1"/>
</dbReference>
<dbReference type="SUPFAM" id="SSF52402">
    <property type="entry name" value="Adenine nucleotide alpha hydrolases-like"/>
    <property type="match status" value="1"/>
</dbReference>
<dbReference type="SUPFAM" id="SSF52821">
    <property type="entry name" value="Rhodanese/Cell cycle control phosphatase"/>
    <property type="match status" value="1"/>
</dbReference>
<dbReference type="SUPFAM" id="SSF143437">
    <property type="entry name" value="THUMP domain-like"/>
    <property type="match status" value="1"/>
</dbReference>
<dbReference type="PROSITE" id="PS50206">
    <property type="entry name" value="RHODANESE_3"/>
    <property type="match status" value="1"/>
</dbReference>
<dbReference type="PROSITE" id="PS51165">
    <property type="entry name" value="THUMP"/>
    <property type="match status" value="1"/>
</dbReference>
<keyword id="KW-0067">ATP-binding</keyword>
<keyword id="KW-0963">Cytoplasm</keyword>
<keyword id="KW-1015">Disulfide bond</keyword>
<keyword id="KW-0547">Nucleotide-binding</keyword>
<keyword id="KW-0676">Redox-active center</keyword>
<keyword id="KW-0694">RNA-binding</keyword>
<keyword id="KW-0784">Thiamine biosynthesis</keyword>
<keyword id="KW-0808">Transferase</keyword>
<keyword id="KW-0820">tRNA-binding</keyword>
<comment type="function">
    <text evidence="1">Catalyzes the ATP-dependent transfer of a sulfur to tRNA to produce 4-thiouridine in position 8 of tRNAs, which functions as a near-UV photosensor. Also catalyzes the transfer of sulfur to the sulfur carrier protein ThiS, forming ThiS-thiocarboxylate. This is a step in the synthesis of thiazole, in the thiamine biosynthesis pathway. The sulfur is donated as persulfide by IscS.</text>
</comment>
<comment type="catalytic activity">
    <reaction evidence="1">
        <text>[ThiI sulfur-carrier protein]-S-sulfanyl-L-cysteine + a uridine in tRNA + 2 reduced [2Fe-2S]-[ferredoxin] + ATP + H(+) = [ThiI sulfur-carrier protein]-L-cysteine + a 4-thiouridine in tRNA + 2 oxidized [2Fe-2S]-[ferredoxin] + AMP + diphosphate</text>
        <dbReference type="Rhea" id="RHEA:24176"/>
        <dbReference type="Rhea" id="RHEA-COMP:10000"/>
        <dbReference type="Rhea" id="RHEA-COMP:10001"/>
        <dbReference type="Rhea" id="RHEA-COMP:13337"/>
        <dbReference type="Rhea" id="RHEA-COMP:13338"/>
        <dbReference type="Rhea" id="RHEA-COMP:13339"/>
        <dbReference type="Rhea" id="RHEA-COMP:13340"/>
        <dbReference type="ChEBI" id="CHEBI:15378"/>
        <dbReference type="ChEBI" id="CHEBI:29950"/>
        <dbReference type="ChEBI" id="CHEBI:30616"/>
        <dbReference type="ChEBI" id="CHEBI:33019"/>
        <dbReference type="ChEBI" id="CHEBI:33737"/>
        <dbReference type="ChEBI" id="CHEBI:33738"/>
        <dbReference type="ChEBI" id="CHEBI:61963"/>
        <dbReference type="ChEBI" id="CHEBI:65315"/>
        <dbReference type="ChEBI" id="CHEBI:136798"/>
        <dbReference type="ChEBI" id="CHEBI:456215"/>
        <dbReference type="EC" id="2.8.1.4"/>
    </reaction>
</comment>
<comment type="catalytic activity">
    <reaction evidence="1">
        <text>[ThiS sulfur-carrier protein]-C-terminal Gly-Gly-AMP + S-sulfanyl-L-cysteinyl-[cysteine desulfurase] + AH2 = [ThiS sulfur-carrier protein]-C-terminal-Gly-aminoethanethioate + L-cysteinyl-[cysteine desulfurase] + A + AMP + 2 H(+)</text>
        <dbReference type="Rhea" id="RHEA:43340"/>
        <dbReference type="Rhea" id="RHEA-COMP:12157"/>
        <dbReference type="Rhea" id="RHEA-COMP:12158"/>
        <dbReference type="Rhea" id="RHEA-COMP:12910"/>
        <dbReference type="Rhea" id="RHEA-COMP:19908"/>
        <dbReference type="ChEBI" id="CHEBI:13193"/>
        <dbReference type="ChEBI" id="CHEBI:15378"/>
        <dbReference type="ChEBI" id="CHEBI:17499"/>
        <dbReference type="ChEBI" id="CHEBI:29950"/>
        <dbReference type="ChEBI" id="CHEBI:61963"/>
        <dbReference type="ChEBI" id="CHEBI:90618"/>
        <dbReference type="ChEBI" id="CHEBI:232372"/>
        <dbReference type="ChEBI" id="CHEBI:456215"/>
    </reaction>
</comment>
<comment type="pathway">
    <text evidence="1">Cofactor biosynthesis; thiamine diphosphate biosynthesis.</text>
</comment>
<comment type="subcellular location">
    <subcellularLocation>
        <location evidence="1">Cytoplasm</location>
    </subcellularLocation>
</comment>
<comment type="similarity">
    <text evidence="1">Belongs to the ThiI family.</text>
</comment>
<accession>A4SP64</accession>
<gene>
    <name evidence="1" type="primary">thiI</name>
    <name type="ordered locus">ASA_2665</name>
</gene>
<organism>
    <name type="scientific">Aeromonas salmonicida (strain A449)</name>
    <dbReference type="NCBI Taxonomy" id="382245"/>
    <lineage>
        <taxon>Bacteria</taxon>
        <taxon>Pseudomonadati</taxon>
        <taxon>Pseudomonadota</taxon>
        <taxon>Gammaproteobacteria</taxon>
        <taxon>Aeromonadales</taxon>
        <taxon>Aeromonadaceae</taxon>
        <taxon>Aeromonas</taxon>
    </lineage>
</organism>
<name>THII_AERS4</name>
<feature type="chain" id="PRO_1000074199" description="tRNA sulfurtransferase">
    <location>
        <begin position="1"/>
        <end position="482"/>
    </location>
</feature>
<feature type="domain" description="THUMP" evidence="1">
    <location>
        <begin position="61"/>
        <end position="165"/>
    </location>
</feature>
<feature type="domain" description="Rhodanese" evidence="1">
    <location>
        <begin position="404"/>
        <end position="482"/>
    </location>
</feature>
<feature type="active site" description="Cysteine persulfide intermediate" evidence="1">
    <location>
        <position position="456"/>
    </location>
</feature>
<feature type="binding site" evidence="1">
    <location>
        <begin position="183"/>
        <end position="184"/>
    </location>
    <ligand>
        <name>ATP</name>
        <dbReference type="ChEBI" id="CHEBI:30616"/>
    </ligand>
</feature>
<feature type="binding site" evidence="1">
    <location>
        <position position="265"/>
    </location>
    <ligand>
        <name>ATP</name>
        <dbReference type="ChEBI" id="CHEBI:30616"/>
    </ligand>
</feature>
<feature type="binding site" evidence="1">
    <location>
        <position position="287"/>
    </location>
    <ligand>
        <name>ATP</name>
        <dbReference type="ChEBI" id="CHEBI:30616"/>
    </ligand>
</feature>
<feature type="binding site" evidence="1">
    <location>
        <position position="296"/>
    </location>
    <ligand>
        <name>ATP</name>
        <dbReference type="ChEBI" id="CHEBI:30616"/>
    </ligand>
</feature>
<feature type="disulfide bond" description="Redox-active" evidence="1">
    <location>
        <begin position="344"/>
        <end position="456"/>
    </location>
</feature>